<proteinExistence type="inferred from homology"/>
<keyword id="KW-0378">Hydrolase</keyword>
<keyword id="KW-1185">Reference proteome</keyword>
<feature type="chain" id="PRO_0000205290" description="Deoxyguanosinetriphosphate triphosphohydrolase-like protein">
    <location>
        <begin position="1"/>
        <end position="405"/>
    </location>
</feature>
<feature type="domain" description="HD" evidence="2">
    <location>
        <begin position="75"/>
        <end position="219"/>
    </location>
</feature>
<dbReference type="EMBL" id="AE007869">
    <property type="protein sequence ID" value="AAK87485.2"/>
    <property type="molecule type" value="Genomic_DNA"/>
</dbReference>
<dbReference type="PIR" id="AB2787">
    <property type="entry name" value="AB2787"/>
</dbReference>
<dbReference type="PIR" id="D97566">
    <property type="entry name" value="D97566"/>
</dbReference>
<dbReference type="RefSeq" id="NP_354700.2">
    <property type="nucleotide sequence ID" value="NC_003062.2"/>
</dbReference>
<dbReference type="RefSeq" id="WP_010971817.1">
    <property type="nucleotide sequence ID" value="NC_003062.2"/>
</dbReference>
<dbReference type="SMR" id="Q8UEP3"/>
<dbReference type="STRING" id="176299.Atu1712"/>
<dbReference type="EnsemblBacteria" id="AAK87485">
    <property type="protein sequence ID" value="AAK87485"/>
    <property type="gene ID" value="Atu1712"/>
</dbReference>
<dbReference type="GeneID" id="1133750"/>
<dbReference type="KEGG" id="atu:Atu1712"/>
<dbReference type="PATRIC" id="fig|176299.10.peg.1727"/>
<dbReference type="eggNOG" id="COG0232">
    <property type="taxonomic scope" value="Bacteria"/>
</dbReference>
<dbReference type="HOGENOM" id="CLU_028163_1_0_5"/>
<dbReference type="OrthoDB" id="9803619at2"/>
<dbReference type="PhylomeDB" id="Q8UEP3"/>
<dbReference type="Proteomes" id="UP000000813">
    <property type="component" value="Chromosome circular"/>
</dbReference>
<dbReference type="GO" id="GO:0008832">
    <property type="term" value="F:dGTPase activity"/>
    <property type="evidence" value="ECO:0007669"/>
    <property type="project" value="TreeGrafter"/>
</dbReference>
<dbReference type="GO" id="GO:0006203">
    <property type="term" value="P:dGTP catabolic process"/>
    <property type="evidence" value="ECO:0007669"/>
    <property type="project" value="TreeGrafter"/>
</dbReference>
<dbReference type="CDD" id="cd00077">
    <property type="entry name" value="HDc"/>
    <property type="match status" value="1"/>
</dbReference>
<dbReference type="Gene3D" id="1.10.3210.10">
    <property type="entry name" value="Hypothetical protein af1432"/>
    <property type="match status" value="1"/>
</dbReference>
<dbReference type="HAMAP" id="MF_01212">
    <property type="entry name" value="dGTPase_type2"/>
    <property type="match status" value="1"/>
</dbReference>
<dbReference type="InterPro" id="IPR006261">
    <property type="entry name" value="dGTPase"/>
</dbReference>
<dbReference type="InterPro" id="IPR050135">
    <property type="entry name" value="dGTPase-like"/>
</dbReference>
<dbReference type="InterPro" id="IPR023023">
    <property type="entry name" value="dNTPase_2"/>
</dbReference>
<dbReference type="InterPro" id="IPR003607">
    <property type="entry name" value="HD/PDEase_dom"/>
</dbReference>
<dbReference type="InterPro" id="IPR006674">
    <property type="entry name" value="HD_domain"/>
</dbReference>
<dbReference type="InterPro" id="IPR026875">
    <property type="entry name" value="PHydrolase_assoc_dom"/>
</dbReference>
<dbReference type="NCBIfam" id="TIGR01353">
    <property type="entry name" value="dGTP_triPase"/>
    <property type="match status" value="1"/>
</dbReference>
<dbReference type="NCBIfam" id="NF002326">
    <property type="entry name" value="PRK01286.1-1"/>
    <property type="match status" value="1"/>
</dbReference>
<dbReference type="NCBIfam" id="NF002328">
    <property type="entry name" value="PRK01286.1-3"/>
    <property type="match status" value="1"/>
</dbReference>
<dbReference type="PANTHER" id="PTHR11373:SF43">
    <property type="entry name" value="DEOXYGUANOSINETRIPHOSPHATE TRIPHOSPHOHYDROLASE-LIKE PROTEIN"/>
    <property type="match status" value="1"/>
</dbReference>
<dbReference type="PANTHER" id="PTHR11373">
    <property type="entry name" value="DEOXYNUCLEOSIDE TRIPHOSPHATE TRIPHOSPHOHYDROLASE"/>
    <property type="match status" value="1"/>
</dbReference>
<dbReference type="Pfam" id="PF01966">
    <property type="entry name" value="HD"/>
    <property type="match status" value="1"/>
</dbReference>
<dbReference type="Pfam" id="PF13286">
    <property type="entry name" value="HD_assoc"/>
    <property type="match status" value="1"/>
</dbReference>
<dbReference type="SMART" id="SM00471">
    <property type="entry name" value="HDc"/>
    <property type="match status" value="1"/>
</dbReference>
<dbReference type="SUPFAM" id="SSF109604">
    <property type="entry name" value="HD-domain/PDEase-like"/>
    <property type="match status" value="1"/>
</dbReference>
<dbReference type="PROSITE" id="PS51831">
    <property type="entry name" value="HD"/>
    <property type="match status" value="1"/>
</dbReference>
<gene>
    <name type="ordered locus">Atu1712</name>
    <name type="ORF">AGR_C_3147</name>
</gene>
<evidence type="ECO:0000255" key="1">
    <source>
        <dbReference type="HAMAP-Rule" id="MF_01212"/>
    </source>
</evidence>
<evidence type="ECO:0000255" key="2">
    <source>
        <dbReference type="PROSITE-ProRule" id="PRU01175"/>
    </source>
</evidence>
<organism>
    <name type="scientific">Agrobacterium fabrum (strain C58 / ATCC 33970)</name>
    <name type="common">Agrobacterium tumefaciens (strain C58)</name>
    <dbReference type="NCBI Taxonomy" id="176299"/>
    <lineage>
        <taxon>Bacteria</taxon>
        <taxon>Pseudomonadati</taxon>
        <taxon>Pseudomonadota</taxon>
        <taxon>Alphaproteobacteria</taxon>
        <taxon>Hyphomicrobiales</taxon>
        <taxon>Rhizobiaceae</taxon>
        <taxon>Rhizobium/Agrobacterium group</taxon>
        <taxon>Agrobacterium</taxon>
        <taxon>Agrobacterium tumefaciens complex</taxon>
    </lineage>
</organism>
<name>DGTL1_AGRFC</name>
<accession>Q8UEP3</accession>
<comment type="similarity">
    <text evidence="1">Belongs to the dGTPase family. Type 2 subfamily.</text>
</comment>
<protein>
    <recommendedName>
        <fullName evidence="1">Deoxyguanosinetriphosphate triphosphohydrolase-like protein</fullName>
    </recommendedName>
</protein>
<sequence length="405" mass="45623">MIIDQRALGFGSGERAVFASDPWTTRGRLFPEAGSLTRSEFQRDRDRIVHTTAFRRLKHKTQVFISPDGDHYRTRLTHTIEVAQIARALARALKLDEDLAEGVALVHDFGHTPFGHTGEDALDAVLLPYGGFDHNAQSLRIVTKLERRYAEYDGINLTWETLEGLVKHNGPLVNAKGEGIKGPVPLPILEYCVLQDLEIGSYASLEAQVAAIADDIAYNTHDIDDGLRAGYLTFEMLEEVPFLSKLMAEVRGKYPVLDKERFANEIMRRQITHMVEDVIGVAQQNLARLKPQSAADIRAADFTVATFSPEMAETDRQIKKLLFGHIYRHPEIMRIRAGATQIVTDLFHRYMETPAEMQSHYWVDSISGMSVAAKARHVGDYLAGMTDSYALRAHQRLFDHTPDLR</sequence>
<reference key="1">
    <citation type="journal article" date="2001" name="Science">
        <title>The genome of the natural genetic engineer Agrobacterium tumefaciens C58.</title>
        <authorList>
            <person name="Wood D.W."/>
            <person name="Setubal J.C."/>
            <person name="Kaul R."/>
            <person name="Monks D.E."/>
            <person name="Kitajima J.P."/>
            <person name="Okura V.K."/>
            <person name="Zhou Y."/>
            <person name="Chen L."/>
            <person name="Wood G.E."/>
            <person name="Almeida N.F. Jr."/>
            <person name="Woo L."/>
            <person name="Chen Y."/>
            <person name="Paulsen I.T."/>
            <person name="Eisen J.A."/>
            <person name="Karp P.D."/>
            <person name="Bovee D. Sr."/>
            <person name="Chapman P."/>
            <person name="Clendenning J."/>
            <person name="Deatherage G."/>
            <person name="Gillet W."/>
            <person name="Grant C."/>
            <person name="Kutyavin T."/>
            <person name="Levy R."/>
            <person name="Li M.-J."/>
            <person name="McClelland E."/>
            <person name="Palmieri A."/>
            <person name="Raymond C."/>
            <person name="Rouse G."/>
            <person name="Saenphimmachak C."/>
            <person name="Wu Z."/>
            <person name="Romero P."/>
            <person name="Gordon D."/>
            <person name="Zhang S."/>
            <person name="Yoo H."/>
            <person name="Tao Y."/>
            <person name="Biddle P."/>
            <person name="Jung M."/>
            <person name="Krespan W."/>
            <person name="Perry M."/>
            <person name="Gordon-Kamm B."/>
            <person name="Liao L."/>
            <person name="Kim S."/>
            <person name="Hendrick C."/>
            <person name="Zhao Z.-Y."/>
            <person name="Dolan M."/>
            <person name="Chumley F."/>
            <person name="Tingey S.V."/>
            <person name="Tomb J.-F."/>
            <person name="Gordon M.P."/>
            <person name="Olson M.V."/>
            <person name="Nester E.W."/>
        </authorList>
    </citation>
    <scope>NUCLEOTIDE SEQUENCE [LARGE SCALE GENOMIC DNA]</scope>
    <source>
        <strain>C58 / ATCC 33970</strain>
    </source>
</reference>
<reference key="2">
    <citation type="journal article" date="2001" name="Science">
        <title>Genome sequence of the plant pathogen and biotechnology agent Agrobacterium tumefaciens C58.</title>
        <authorList>
            <person name="Goodner B."/>
            <person name="Hinkle G."/>
            <person name="Gattung S."/>
            <person name="Miller N."/>
            <person name="Blanchard M."/>
            <person name="Qurollo B."/>
            <person name="Goldman B.S."/>
            <person name="Cao Y."/>
            <person name="Askenazi M."/>
            <person name="Halling C."/>
            <person name="Mullin L."/>
            <person name="Houmiel K."/>
            <person name="Gordon J."/>
            <person name="Vaudin M."/>
            <person name="Iartchouk O."/>
            <person name="Epp A."/>
            <person name="Liu F."/>
            <person name="Wollam C."/>
            <person name="Allinger M."/>
            <person name="Doughty D."/>
            <person name="Scott C."/>
            <person name="Lappas C."/>
            <person name="Markelz B."/>
            <person name="Flanagan C."/>
            <person name="Crowell C."/>
            <person name="Gurson J."/>
            <person name="Lomo C."/>
            <person name="Sear C."/>
            <person name="Strub G."/>
            <person name="Cielo C."/>
            <person name="Slater S."/>
        </authorList>
    </citation>
    <scope>NUCLEOTIDE SEQUENCE [LARGE SCALE GENOMIC DNA]</scope>
    <source>
        <strain>C58 / ATCC 33970</strain>
    </source>
</reference>